<comment type="function">
    <text evidence="1">Plays a central role in 2-thiolation of mcm(5)S(2)U at tRNA wobble positions of tRNA(Lys), tRNA(Glu) and tRNA(Gln). May act by forming a heterodimer with NCS6/CTU1 that ligates sulfur from thiocarboxylated URM1 onto the uridine of tRNAs at wobble position.</text>
</comment>
<comment type="pathway">
    <text evidence="1">tRNA modification; 5-methoxycarbonylmethyl-2-thiouridine-tRNA biosynthesis.</text>
</comment>
<comment type="subcellular location">
    <subcellularLocation>
        <location evidence="1">Cytoplasm</location>
    </subcellularLocation>
</comment>
<comment type="similarity">
    <text evidence="1">Belongs to the CTU2/NCS2 family.</text>
</comment>
<feature type="chain" id="PRO_0000369279" description="Cytoplasmic tRNA 2-thiolation protein 2">
    <location>
        <begin position="1"/>
        <end position="403"/>
    </location>
</feature>
<protein>
    <recommendedName>
        <fullName evidence="1">Cytoplasmic tRNA 2-thiolation protein 2</fullName>
    </recommendedName>
</protein>
<name>CTU2_DROWI</name>
<gene>
    <name type="ORF">GK18201</name>
</gene>
<dbReference type="EMBL" id="CH963913">
    <property type="protein sequence ID" value="EDW77251.1"/>
    <property type="molecule type" value="Genomic_DNA"/>
</dbReference>
<dbReference type="SMR" id="B4MYR2"/>
<dbReference type="STRING" id="7260.B4MYR2"/>
<dbReference type="EnsemblMetazoa" id="FBtr0248852">
    <property type="protein sequence ID" value="FBpp0247344"/>
    <property type="gene ID" value="FBgn0220200"/>
</dbReference>
<dbReference type="EnsemblMetazoa" id="XM_002066229.3">
    <property type="protein sequence ID" value="XP_002066265.1"/>
    <property type="gene ID" value="LOC6643580"/>
</dbReference>
<dbReference type="GeneID" id="6643580"/>
<dbReference type="KEGG" id="dwi:6643580"/>
<dbReference type="CTD" id="348180"/>
<dbReference type="eggNOG" id="KOG2594">
    <property type="taxonomic scope" value="Eukaryota"/>
</dbReference>
<dbReference type="HOGENOM" id="CLU_024534_2_1_1"/>
<dbReference type="OMA" id="CHACRNI"/>
<dbReference type="OrthoDB" id="25129at2759"/>
<dbReference type="PhylomeDB" id="B4MYR2"/>
<dbReference type="UniPathway" id="UPA00988"/>
<dbReference type="Proteomes" id="UP000007798">
    <property type="component" value="Unassembled WGS sequence"/>
</dbReference>
<dbReference type="GO" id="GO:0005829">
    <property type="term" value="C:cytosol"/>
    <property type="evidence" value="ECO:0000250"/>
    <property type="project" value="UniProtKB"/>
</dbReference>
<dbReference type="GO" id="GO:0016779">
    <property type="term" value="F:nucleotidyltransferase activity"/>
    <property type="evidence" value="ECO:0007669"/>
    <property type="project" value="UniProtKB-UniRule"/>
</dbReference>
<dbReference type="GO" id="GO:0016783">
    <property type="term" value="F:sulfurtransferase activity"/>
    <property type="evidence" value="ECO:0007669"/>
    <property type="project" value="TreeGrafter"/>
</dbReference>
<dbReference type="GO" id="GO:0000049">
    <property type="term" value="F:tRNA binding"/>
    <property type="evidence" value="ECO:0007669"/>
    <property type="project" value="InterPro"/>
</dbReference>
<dbReference type="GO" id="GO:0032447">
    <property type="term" value="P:protein urmylation"/>
    <property type="evidence" value="ECO:0007669"/>
    <property type="project" value="UniProtKB-UniRule"/>
</dbReference>
<dbReference type="GO" id="GO:0034227">
    <property type="term" value="P:tRNA thio-modification"/>
    <property type="evidence" value="ECO:0000250"/>
    <property type="project" value="UniProtKB"/>
</dbReference>
<dbReference type="GO" id="GO:0002143">
    <property type="term" value="P:tRNA wobble position uridine thiolation"/>
    <property type="evidence" value="ECO:0007669"/>
    <property type="project" value="TreeGrafter"/>
</dbReference>
<dbReference type="GO" id="GO:0002098">
    <property type="term" value="P:tRNA wobble uridine modification"/>
    <property type="evidence" value="ECO:0000250"/>
    <property type="project" value="UniProtKB"/>
</dbReference>
<dbReference type="FunFam" id="3.40.50.620:FF:000229">
    <property type="entry name" value="Cytoplasmic tRNA 2-thiolation protein 2"/>
    <property type="match status" value="1"/>
</dbReference>
<dbReference type="Gene3D" id="3.40.50.620">
    <property type="entry name" value="HUPs"/>
    <property type="match status" value="1"/>
</dbReference>
<dbReference type="HAMAP" id="MF_03054">
    <property type="entry name" value="CTU2"/>
    <property type="match status" value="1"/>
</dbReference>
<dbReference type="InterPro" id="IPR019407">
    <property type="entry name" value="CTU2"/>
</dbReference>
<dbReference type="InterPro" id="IPR014729">
    <property type="entry name" value="Rossmann-like_a/b/a_fold"/>
</dbReference>
<dbReference type="PANTHER" id="PTHR20882">
    <property type="entry name" value="CYTOPLASMIC TRNA 2-THIOLATION PROTEIN 2"/>
    <property type="match status" value="1"/>
</dbReference>
<dbReference type="PANTHER" id="PTHR20882:SF14">
    <property type="entry name" value="CYTOPLASMIC TRNA 2-THIOLATION PROTEIN 2"/>
    <property type="match status" value="1"/>
</dbReference>
<dbReference type="Pfam" id="PF10288">
    <property type="entry name" value="CTU2"/>
    <property type="match status" value="1"/>
</dbReference>
<dbReference type="SUPFAM" id="SSF52402">
    <property type="entry name" value="Adenine nucleotide alpha hydrolases-like"/>
    <property type="match status" value="1"/>
</dbReference>
<reference key="1">
    <citation type="journal article" date="2007" name="Nature">
        <title>Evolution of genes and genomes on the Drosophila phylogeny.</title>
        <authorList>
            <consortium name="Drosophila 12 genomes consortium"/>
        </authorList>
    </citation>
    <scope>NUCLEOTIDE SEQUENCE [LARGE SCALE GENOMIC DNA]</scope>
    <source>
        <strain>Tucson 14030-0811.24</strain>
    </source>
</reference>
<keyword id="KW-0963">Cytoplasm</keyword>
<keyword id="KW-1185">Reference proteome</keyword>
<keyword id="KW-0819">tRNA processing</keyword>
<sequence length="403" mass="45282">MCSIGEDDFGDTGGLHAMTAGGPVQIATGGTGECQKCGQHSDDLFKVNFRSEECRDCFLNYARHKFRAALGAAKALPRDSDVLLLLDGSIESIVLLDMLHYAQTQNTFKRLHCQAKVLYLDESVVQEQQSLDIDRLQKLQDRYTPFDLFVIELGTDLSNLRPLKNYTPKTSREESDLKIKLDKLRTLSARQDYLQQQRKRFLASVAHQLNCTHVFVPSISKDLATQFLTSIALGRGGSAALDVALCDDRLDHDIKLLRPLKDLNEQEVQLYVRARNLEDLKLGPSLATYGQEKGETASLQNLTAAFVRNLQENYAATVSTVFRTGNKIAPNRHVDQDMCQQCQSPLDSLLSDTLLAIEYSRVVSLEGSKLSNHNNDLEQLSMQRLNKDDRLCHACRNVQDEYL</sequence>
<accession>B4MYR2</accession>
<proteinExistence type="inferred from homology"/>
<evidence type="ECO:0000255" key="1">
    <source>
        <dbReference type="HAMAP-Rule" id="MF_03054"/>
    </source>
</evidence>
<organism>
    <name type="scientific">Drosophila willistoni</name>
    <name type="common">Fruit fly</name>
    <dbReference type="NCBI Taxonomy" id="7260"/>
    <lineage>
        <taxon>Eukaryota</taxon>
        <taxon>Metazoa</taxon>
        <taxon>Ecdysozoa</taxon>
        <taxon>Arthropoda</taxon>
        <taxon>Hexapoda</taxon>
        <taxon>Insecta</taxon>
        <taxon>Pterygota</taxon>
        <taxon>Neoptera</taxon>
        <taxon>Endopterygota</taxon>
        <taxon>Diptera</taxon>
        <taxon>Brachycera</taxon>
        <taxon>Muscomorpha</taxon>
        <taxon>Ephydroidea</taxon>
        <taxon>Drosophilidae</taxon>
        <taxon>Drosophila</taxon>
        <taxon>Sophophora</taxon>
    </lineage>
</organism>